<sequence>MRTTVAILLVLFALSAILAFYPDTTAEAKGCVKKVDCVCKGKGKKNHRSMCINGKCYCLKG</sequence>
<evidence type="ECO:0000250" key="1"/>
<evidence type="ECO:0000255" key="2"/>
<comment type="subcellular location">
    <subcellularLocation>
        <location evidence="1">Secreted</location>
    </subcellularLocation>
</comment>
<comment type="tissue specificity">
    <text>Expressed by the venom gland.</text>
</comment>
<protein>
    <recommendedName>
        <fullName>Putative neurotoxin-D</fullName>
    </recommendedName>
</protein>
<proteinExistence type="evidence at transcript level"/>
<feature type="signal peptide" evidence="2">
    <location>
        <begin position="1"/>
        <end position="19"/>
    </location>
</feature>
<feature type="chain" id="PRO_0000403836" description="Putative neurotoxin-D">
    <location>
        <begin position="20"/>
        <end position="61"/>
    </location>
</feature>
<feature type="disulfide bond" evidence="1">
    <location>
        <begin position="31"/>
        <end position="51"/>
    </location>
</feature>
<feature type="disulfide bond" evidence="1">
    <location>
        <begin position="37"/>
        <end position="56"/>
    </location>
</feature>
<feature type="disulfide bond" evidence="1">
    <location>
        <begin position="39"/>
        <end position="58"/>
    </location>
</feature>
<name>KTXD_LYCMC</name>
<organism>
    <name type="scientific">Lychas mucronatus</name>
    <name type="common">Chinese swimming scorpion</name>
    <dbReference type="NCBI Taxonomy" id="172552"/>
    <lineage>
        <taxon>Eukaryota</taxon>
        <taxon>Metazoa</taxon>
        <taxon>Ecdysozoa</taxon>
        <taxon>Arthropoda</taxon>
        <taxon>Chelicerata</taxon>
        <taxon>Arachnida</taxon>
        <taxon>Scorpiones</taxon>
        <taxon>Buthida</taxon>
        <taxon>Buthoidea</taxon>
        <taxon>Buthidae</taxon>
        <taxon>Lychas</taxon>
    </lineage>
</organism>
<keyword id="KW-1015">Disulfide bond</keyword>
<keyword id="KW-0872">Ion channel impairing toxin</keyword>
<keyword id="KW-0528">Neurotoxin</keyword>
<keyword id="KW-0964">Secreted</keyword>
<keyword id="KW-0732">Signal</keyword>
<keyword id="KW-0800">Toxin</keyword>
<reference key="1">
    <citation type="journal article" date="2010" name="BMC Genomics">
        <title>Comparative venom gland transcriptome analysis of the scorpion Lychas mucronatus reveals intraspecific toxic gene diversity and new venomous components.</title>
        <authorList>
            <person name="Zhao R."/>
            <person name="Ma Y."/>
            <person name="He Y."/>
            <person name="Di Z."/>
            <person name="Wu Y.-L."/>
            <person name="Cao Z.-J."/>
            <person name="Li W.-X."/>
        </authorList>
    </citation>
    <scope>NUCLEOTIDE SEQUENCE [MRNA]</scope>
    <source>
        <strain>Yunnan</strain>
        <tissue>Venom gland</tissue>
    </source>
</reference>
<accession>P0CI85</accession>
<dbReference type="EMBL" id="GT028876">
    <property type="status" value="NOT_ANNOTATED_CDS"/>
    <property type="molecule type" value="mRNA"/>
</dbReference>
<dbReference type="SMR" id="P0CI85"/>
<dbReference type="GO" id="GO:0005576">
    <property type="term" value="C:extracellular region"/>
    <property type="evidence" value="ECO:0007669"/>
    <property type="project" value="UniProtKB-SubCell"/>
</dbReference>
<dbReference type="GO" id="GO:0099106">
    <property type="term" value="F:ion channel regulator activity"/>
    <property type="evidence" value="ECO:0007669"/>
    <property type="project" value="UniProtKB-KW"/>
</dbReference>
<dbReference type="GO" id="GO:0090729">
    <property type="term" value="F:toxin activity"/>
    <property type="evidence" value="ECO:0007669"/>
    <property type="project" value="UniProtKB-KW"/>
</dbReference>